<accession>P79124</accession>
<protein>
    <recommendedName>
        <fullName>Short palate, lung and nasal epithelium carcinoma-associated protein 2A</fullName>
    </recommendedName>
    <alternativeName>
        <fullName>BSP30a</fullName>
    </alternativeName>
    <alternativeName>
        <fullName>Common salivary protein form a</fullName>
    </alternativeName>
</protein>
<sequence>MVQLWKLVLLCGLLAGTSESLLDIRGNDVLRRLISGLERGLGTFDSTIEIIFQNLKTELESRCLNDVVEETQQTENSLEGLISRIFQVVNRLTGVRIRNVQVPDITFEATSENSADVSIPITADVTVSLPLLGEIVKLDLNVDLQTSVSIETDAETGDSRVVVGECPNNPESISLTVLHRRPGLLNDVVDFGVNLVRQLVSSVVQHELCPRIRELLESLDTECIKKLIGEPQVTTQQEI</sequence>
<feature type="signal peptide" evidence="2">
    <location>
        <begin position="1"/>
        <end position="20"/>
    </location>
</feature>
<feature type="chain" id="PRO_0000017182" description="Short palate, lung and nasal epithelium carcinoma-associated protein 2A">
    <location>
        <begin position="21"/>
        <end position="239"/>
    </location>
</feature>
<feature type="disulfide bond" evidence="1">
    <location>
        <begin position="166"/>
        <end position="209"/>
    </location>
</feature>
<name>SPL2A_BOVIN</name>
<keyword id="KW-1015">Disulfide bond</keyword>
<keyword id="KW-1185">Reference proteome</keyword>
<keyword id="KW-0964">Secreted</keyword>
<keyword id="KW-0732">Signal</keyword>
<dbReference type="EMBL" id="U79413">
    <property type="protein sequence ID" value="AAB38282.2"/>
    <property type="molecule type" value="mRNA"/>
</dbReference>
<dbReference type="RefSeq" id="NP_777228.2">
    <property type="nucleotide sequence ID" value="NM_174803.3"/>
</dbReference>
<dbReference type="SMR" id="P79124"/>
<dbReference type="FunCoup" id="P79124">
    <property type="interactions" value="15"/>
</dbReference>
<dbReference type="STRING" id="9913.ENSBTAP00000012052"/>
<dbReference type="PaxDb" id="9913-ENSBTAP00000012052"/>
<dbReference type="GeneID" id="286882"/>
<dbReference type="KEGG" id="bta:286882"/>
<dbReference type="CTD" id="286882"/>
<dbReference type="eggNOG" id="ENOG502TE6F">
    <property type="taxonomic scope" value="Eukaryota"/>
</dbReference>
<dbReference type="InParanoid" id="P79124"/>
<dbReference type="OrthoDB" id="9838142at2759"/>
<dbReference type="Proteomes" id="UP000009136">
    <property type="component" value="Unplaced"/>
</dbReference>
<dbReference type="GO" id="GO:0005576">
    <property type="term" value="C:extracellular region"/>
    <property type="evidence" value="ECO:0007669"/>
    <property type="project" value="UniProtKB-SubCell"/>
</dbReference>
<dbReference type="GO" id="GO:0030141">
    <property type="term" value="C:secretory granule"/>
    <property type="evidence" value="ECO:0000318"/>
    <property type="project" value="GO_Central"/>
</dbReference>
<dbReference type="GO" id="GO:0001530">
    <property type="term" value="F:lipopolysaccharide binding"/>
    <property type="evidence" value="ECO:0000318"/>
    <property type="project" value="GO_Central"/>
</dbReference>
<dbReference type="Gene3D" id="3.15.10.10">
    <property type="entry name" value="Bactericidal permeability-increasing protein, domain 1"/>
    <property type="match status" value="1"/>
</dbReference>
<dbReference type="InterPro" id="IPR017943">
    <property type="entry name" value="Bactericidal_perm-incr_a/b_dom"/>
</dbReference>
<dbReference type="InterPro" id="IPR052507">
    <property type="entry name" value="BPI_fold-antibacterial"/>
</dbReference>
<dbReference type="InterPro" id="IPR017942">
    <property type="entry name" value="Lipid-bd_serum_glycop_N"/>
</dbReference>
<dbReference type="PANTHER" id="PTHR47145">
    <property type="entry name" value="BPI FOLD-CONTAINING FAMILY A MEMBER 2"/>
    <property type="match status" value="1"/>
</dbReference>
<dbReference type="PANTHER" id="PTHR47145:SF1">
    <property type="entry name" value="BPI FOLD-CONTAINING FAMILY A MEMBER 2"/>
    <property type="match status" value="1"/>
</dbReference>
<dbReference type="Pfam" id="PF01273">
    <property type="entry name" value="LBP_BPI_CETP"/>
    <property type="match status" value="1"/>
</dbReference>
<dbReference type="SUPFAM" id="SSF55394">
    <property type="entry name" value="Bactericidal permeability-increasing protein, BPI"/>
    <property type="match status" value="1"/>
</dbReference>
<gene>
    <name type="primary">SPLUNC2A</name>
    <name type="synonym">BSP30A</name>
</gene>
<reference key="1">
    <citation type="journal article" date="2002" name="Biochim. Biophys. Acta">
        <title>The BSP30 salivary proteins from cattle, LUNX/PLUNC and von Ebner's minor salivary gland protein are members of the PSP/LBP superfamily of proteins.</title>
        <authorList>
            <person name="Wheeler T.T."/>
            <person name="Haigh B.J."/>
            <person name="McCracken J.Y."/>
            <person name="Wilkins R.J."/>
            <person name="Morris C.A."/>
            <person name="Grigor M.R."/>
        </authorList>
    </citation>
    <scope>NUCLEOTIDE SEQUENCE [MRNA]</scope>
    <source>
        <strain>Holstein-Friesian</strain>
        <tissue>Parotid gland</tissue>
    </source>
</reference>
<reference key="2">
    <citation type="submission" date="2006-06" db="EMBL/GenBank/DDBJ databases">
        <authorList>
            <person name="Haigh B.J."/>
            <person name="Wilkins R.J."/>
            <person name="Wheeler T.T."/>
        </authorList>
    </citation>
    <scope>SEQUENCE REVISION TO C-TERMINUS</scope>
</reference>
<comment type="subcellular location">
    <subcellularLocation>
        <location evidence="1">Secreted</location>
    </subcellularLocation>
</comment>
<comment type="tissue specificity">
    <text>Detected in salivary tissues: parotid, submandibular and sublingual glands.</text>
</comment>
<comment type="similarity">
    <text evidence="3">Belongs to the BPI/LBP/Plunc superfamily. Plunc family.</text>
</comment>
<proteinExistence type="evidence at transcript level"/>
<organism>
    <name type="scientific">Bos taurus</name>
    <name type="common">Bovine</name>
    <dbReference type="NCBI Taxonomy" id="9913"/>
    <lineage>
        <taxon>Eukaryota</taxon>
        <taxon>Metazoa</taxon>
        <taxon>Chordata</taxon>
        <taxon>Craniata</taxon>
        <taxon>Vertebrata</taxon>
        <taxon>Euteleostomi</taxon>
        <taxon>Mammalia</taxon>
        <taxon>Eutheria</taxon>
        <taxon>Laurasiatheria</taxon>
        <taxon>Artiodactyla</taxon>
        <taxon>Ruminantia</taxon>
        <taxon>Pecora</taxon>
        <taxon>Bovidae</taxon>
        <taxon>Bovinae</taxon>
        <taxon>Bos</taxon>
    </lineage>
</organism>
<evidence type="ECO:0000250" key="1"/>
<evidence type="ECO:0000255" key="2"/>
<evidence type="ECO:0000305" key="3"/>